<gene>
    <name evidence="1" type="primary">recA</name>
</gene>
<dbReference type="EMBL" id="M96558">
    <property type="protein sequence ID" value="AAA25980.1"/>
    <property type="molecule type" value="Genomic_DNA"/>
</dbReference>
<dbReference type="PIR" id="A47709">
    <property type="entry name" value="A47709"/>
</dbReference>
<dbReference type="SMR" id="Q01953"/>
<dbReference type="eggNOG" id="COG0468">
    <property type="taxonomic scope" value="Bacteria"/>
</dbReference>
<dbReference type="GO" id="GO:0005829">
    <property type="term" value="C:cytosol"/>
    <property type="evidence" value="ECO:0007669"/>
    <property type="project" value="TreeGrafter"/>
</dbReference>
<dbReference type="GO" id="GO:0005524">
    <property type="term" value="F:ATP binding"/>
    <property type="evidence" value="ECO:0007669"/>
    <property type="project" value="UniProtKB-UniRule"/>
</dbReference>
<dbReference type="GO" id="GO:0016887">
    <property type="term" value="F:ATP hydrolysis activity"/>
    <property type="evidence" value="ECO:0007669"/>
    <property type="project" value="InterPro"/>
</dbReference>
<dbReference type="GO" id="GO:0140664">
    <property type="term" value="F:ATP-dependent DNA damage sensor activity"/>
    <property type="evidence" value="ECO:0007669"/>
    <property type="project" value="InterPro"/>
</dbReference>
<dbReference type="GO" id="GO:0003684">
    <property type="term" value="F:damaged DNA binding"/>
    <property type="evidence" value="ECO:0007669"/>
    <property type="project" value="UniProtKB-UniRule"/>
</dbReference>
<dbReference type="GO" id="GO:0003697">
    <property type="term" value="F:single-stranded DNA binding"/>
    <property type="evidence" value="ECO:0007669"/>
    <property type="project" value="UniProtKB-UniRule"/>
</dbReference>
<dbReference type="GO" id="GO:0006310">
    <property type="term" value="P:DNA recombination"/>
    <property type="evidence" value="ECO:0007669"/>
    <property type="project" value="UniProtKB-UniRule"/>
</dbReference>
<dbReference type="GO" id="GO:0006281">
    <property type="term" value="P:DNA repair"/>
    <property type="evidence" value="ECO:0007669"/>
    <property type="project" value="UniProtKB-UniRule"/>
</dbReference>
<dbReference type="GO" id="GO:0009432">
    <property type="term" value="P:SOS response"/>
    <property type="evidence" value="ECO:0007669"/>
    <property type="project" value="UniProtKB-UniRule"/>
</dbReference>
<dbReference type="CDD" id="cd00983">
    <property type="entry name" value="RecA"/>
    <property type="match status" value="1"/>
</dbReference>
<dbReference type="FunFam" id="3.40.50.300:FF:000087">
    <property type="entry name" value="Recombinase RecA"/>
    <property type="match status" value="1"/>
</dbReference>
<dbReference type="Gene3D" id="3.40.50.300">
    <property type="entry name" value="P-loop containing nucleotide triphosphate hydrolases"/>
    <property type="match status" value="1"/>
</dbReference>
<dbReference type="HAMAP" id="MF_00268">
    <property type="entry name" value="RecA"/>
    <property type="match status" value="1"/>
</dbReference>
<dbReference type="InterPro" id="IPR003593">
    <property type="entry name" value="AAA+_ATPase"/>
</dbReference>
<dbReference type="InterPro" id="IPR013765">
    <property type="entry name" value="DNA_recomb/repair_RecA"/>
</dbReference>
<dbReference type="InterPro" id="IPR020584">
    <property type="entry name" value="DNA_recomb/repair_RecA_CS"/>
</dbReference>
<dbReference type="InterPro" id="IPR027417">
    <property type="entry name" value="P-loop_NTPase"/>
</dbReference>
<dbReference type="InterPro" id="IPR049261">
    <property type="entry name" value="RecA-like_C"/>
</dbReference>
<dbReference type="InterPro" id="IPR049428">
    <property type="entry name" value="RecA-like_N"/>
</dbReference>
<dbReference type="InterPro" id="IPR020588">
    <property type="entry name" value="RecA_ATP-bd"/>
</dbReference>
<dbReference type="InterPro" id="IPR023400">
    <property type="entry name" value="RecA_C_sf"/>
</dbReference>
<dbReference type="InterPro" id="IPR020587">
    <property type="entry name" value="RecA_monomer-monomer_interface"/>
</dbReference>
<dbReference type="NCBIfam" id="TIGR02012">
    <property type="entry name" value="tigrfam_recA"/>
    <property type="match status" value="1"/>
</dbReference>
<dbReference type="PANTHER" id="PTHR45900:SF1">
    <property type="entry name" value="MITOCHONDRIAL DNA REPAIR PROTEIN RECA HOMOLOG-RELATED"/>
    <property type="match status" value="1"/>
</dbReference>
<dbReference type="PANTHER" id="PTHR45900">
    <property type="entry name" value="RECA"/>
    <property type="match status" value="1"/>
</dbReference>
<dbReference type="Pfam" id="PF00154">
    <property type="entry name" value="RecA"/>
    <property type="match status" value="1"/>
</dbReference>
<dbReference type="Pfam" id="PF21096">
    <property type="entry name" value="RecA_C"/>
    <property type="match status" value="1"/>
</dbReference>
<dbReference type="PRINTS" id="PR00142">
    <property type="entry name" value="RECA"/>
</dbReference>
<dbReference type="SMART" id="SM00382">
    <property type="entry name" value="AAA"/>
    <property type="match status" value="1"/>
</dbReference>
<dbReference type="SUPFAM" id="SSF52540">
    <property type="entry name" value="P-loop containing nucleoside triphosphate hydrolases"/>
    <property type="match status" value="1"/>
</dbReference>
<dbReference type="SUPFAM" id="SSF54752">
    <property type="entry name" value="RecA protein, C-terminal domain"/>
    <property type="match status" value="1"/>
</dbReference>
<dbReference type="PROSITE" id="PS00321">
    <property type="entry name" value="RECA_1"/>
    <property type="match status" value="1"/>
</dbReference>
<dbReference type="PROSITE" id="PS50162">
    <property type="entry name" value="RECA_2"/>
    <property type="match status" value="1"/>
</dbReference>
<dbReference type="PROSITE" id="PS50163">
    <property type="entry name" value="RECA_3"/>
    <property type="match status" value="1"/>
</dbReference>
<evidence type="ECO:0000255" key="1">
    <source>
        <dbReference type="HAMAP-Rule" id="MF_00268"/>
    </source>
</evidence>
<evidence type="ECO:0000256" key="2">
    <source>
        <dbReference type="SAM" id="MobiDB-lite"/>
    </source>
</evidence>
<comment type="function">
    <text>Can catalyze the hydrolysis of ATP in the presence of single-stranded DNA, the ATP-dependent uptake of single-stranded DNA by duplex DNA, and the ATP-dependent hybridization of homologous single-stranded DNAs. It interacts with LexA causing its activation and leading to its autocatalytic cleavage.</text>
</comment>
<comment type="subcellular location">
    <subcellularLocation>
        <location evidence="1">Cytoplasm</location>
    </subcellularLocation>
</comment>
<comment type="similarity">
    <text evidence="1">Belongs to the RecA family.</text>
</comment>
<accession>Q01953</accession>
<proteinExistence type="inferred from homology"/>
<name>RECA_PSEFL</name>
<sequence>MDDNKKKALAAALGQIERQFGKGAVMRMGDHDRQAIPAISTGSLGLDIALGIGGLPKGRIVEIYGPESSGKTTLTLSVIAQAQKMGATCAFVDAEHALDPEYAGKLGVNVDDLLVSQPDTGEQALEITDMLVRSNAIDVIVVDSVAALVPKAEIEGEMGDMHVGLQARLMSQALRKITGNIKNANCLVIFINQIRMKIGVMFGSPETTTGGNALKFYASVRLDIRRTGAVKEGDEVVGSETRVKVVKNKVAPPFRQAEFQILYGKGIYLNGEMIDLGVLHGFVEKSGAWYAYNGSKIGQGKANSAKFLADNPDIVATLEKQIRDKLLTPAPDVKAAANREPVEEVEEADTDI</sequence>
<keyword id="KW-0067">ATP-binding</keyword>
<keyword id="KW-0963">Cytoplasm</keyword>
<keyword id="KW-0227">DNA damage</keyword>
<keyword id="KW-0233">DNA recombination</keyword>
<keyword id="KW-0234">DNA repair</keyword>
<keyword id="KW-0238">DNA-binding</keyword>
<keyword id="KW-0547">Nucleotide-binding</keyword>
<keyword id="KW-0742">SOS response</keyword>
<organism>
    <name type="scientific">Pseudomonas fluorescens</name>
    <dbReference type="NCBI Taxonomy" id="294"/>
    <lineage>
        <taxon>Bacteria</taxon>
        <taxon>Pseudomonadati</taxon>
        <taxon>Pseudomonadota</taxon>
        <taxon>Gammaproteobacteria</taxon>
        <taxon>Pseudomonadales</taxon>
        <taxon>Pseudomonadaceae</taxon>
        <taxon>Pseudomonas</taxon>
    </lineage>
</organism>
<reference key="1">
    <citation type="journal article" date="1993" name="J. Gen. Microbiol.">
        <title>Characterization of the recA gene from Pseudomonas fluorescens OE 28.3 and construction of a recA mutant.</title>
        <authorList>
            <person name="de Mot R."/>
            <person name="Laeremans T."/>
            <person name="Schoofs G."/>
            <person name="Vanderleyden J."/>
        </authorList>
    </citation>
    <scope>NUCLEOTIDE SEQUENCE [GENOMIC DNA]</scope>
    <source>
        <strain>OE 28.3</strain>
    </source>
</reference>
<feature type="chain" id="PRO_0000122802" description="Protein RecA">
    <location>
        <begin position="1"/>
        <end position="352"/>
    </location>
</feature>
<feature type="region of interest" description="Disordered" evidence="2">
    <location>
        <begin position="333"/>
        <end position="352"/>
    </location>
</feature>
<feature type="compositionally biased region" description="Acidic residues" evidence="2">
    <location>
        <begin position="343"/>
        <end position="352"/>
    </location>
</feature>
<feature type="binding site" evidence="1">
    <location>
        <begin position="65"/>
        <end position="72"/>
    </location>
    <ligand>
        <name>ATP</name>
        <dbReference type="ChEBI" id="CHEBI:30616"/>
    </ligand>
</feature>
<protein>
    <recommendedName>
        <fullName evidence="1">Protein RecA</fullName>
    </recommendedName>
    <alternativeName>
        <fullName evidence="1">Recombinase A</fullName>
    </alternativeName>
</protein>